<gene>
    <name evidence="1" type="primary">malT</name>
    <name type="ordered locus">VPA1623</name>
</gene>
<reference key="1">
    <citation type="journal article" date="2003" name="Lancet">
        <title>Genome sequence of Vibrio parahaemolyticus: a pathogenic mechanism distinct from that of V. cholerae.</title>
        <authorList>
            <person name="Makino K."/>
            <person name="Oshima K."/>
            <person name="Kurokawa K."/>
            <person name="Yokoyama K."/>
            <person name="Uda T."/>
            <person name="Tagomori K."/>
            <person name="Iijima Y."/>
            <person name="Najima M."/>
            <person name="Nakano M."/>
            <person name="Yamashita A."/>
            <person name="Kubota Y."/>
            <person name="Kimura S."/>
            <person name="Yasunaga T."/>
            <person name="Honda T."/>
            <person name="Shinagawa H."/>
            <person name="Hattori M."/>
            <person name="Iida T."/>
        </authorList>
    </citation>
    <scope>NUCLEOTIDE SEQUENCE [LARGE SCALE GENOMIC DNA]</scope>
    <source>
        <strain>RIMD 2210633</strain>
    </source>
</reference>
<keyword id="KW-0010">Activator</keyword>
<keyword id="KW-0067">ATP-binding</keyword>
<keyword id="KW-0119">Carbohydrate metabolism</keyword>
<keyword id="KW-0238">DNA-binding</keyword>
<keyword id="KW-0547">Nucleotide-binding</keyword>
<keyword id="KW-0804">Transcription</keyword>
<keyword id="KW-0805">Transcription regulation</keyword>
<name>MALT_VIBPA</name>
<comment type="function">
    <text evidence="1">Positively regulates the transcription of the maltose regulon whose gene products are responsible for uptake and catabolism of malto-oligosaccharides. Specifically binds to the promoter region of its target genes, recognizing a short DNA motif called the MalT box.</text>
</comment>
<comment type="activity regulation">
    <text evidence="1">Activated by ATP and maltotriose, which are both required for DNA binding.</text>
</comment>
<comment type="subunit">
    <text evidence="1">Monomer in solution. Oligomerizes to an active state in the presence of the positive effectors ATP and maltotriose.</text>
</comment>
<comment type="similarity">
    <text evidence="1">Belongs to the MalT family.</text>
</comment>
<sequence>MWIPSKLTRPGRLHNAIVRPRVLDLLQQAPYYKLVLFRSPAGYGKTTMAAQWLSDKPNVGWYSIDDSDNDGFRFVNYLLQALNKATNFSCSNAQKLAEKRQISSLRSLFSEVFAEMADFHQECYVVLDDYHLITNDEIHESMRFFLKHMPDNLTVVVTSRAAPPLGTANLRVRDLMIEIGNEMLAFDTEETTRFFNQRIADGIDEDMANSLRTYVEGWPSAMQLIALQAQHQNRTLAQTVESVSQFNHAHLWDYLVEEVFDLLDHETRHFLMQVSVLDHFNDELVFALTQREDALGLIESLNRYGLFIYPLEGEHNWFRFHNLFGEFLSHERQARIPQQEKDLHRNAAVAWLQQKSPHQAIHHAQKSNDKDLVVEILNEFGWKMFNQGELSTLEHAINKLDAELLFSHPKLTMLRAWLAQSQHRYNQVGQLLEEAEEEHKKRNIELDIHYQGQANALLAQVAINSNQPEKALELAELALSQLDNTIYRSRIVATSVVGEVNHVLGKLDRALPMMQQTEKLARQYQVYHQALWAILQQSEILIAQGYVQAAFELQDSGFRLIEDQQLQHVPLHEFLLRIRAQVLWCWNRLDEAEECAYRGLQILENHSPSKHLHSYSMLARIAIGRGELDKAGKFIEHIQHLMKQSTYHVDWTANASLSLILFWQARGNTEAMQEWLNTAVRPESACNHFLQLQWRNIVRAHINLGQYEEARQALNFLQSEARRTNLITDTNRNLVVEAVLAARQKDEEQAKALLKEALVMTNQTGMVGNFLIDGATIGGLLEKLSLRHELGDLERHRAQQLMKDISSNQRSRSIHFDEDFIEKLVNHPNVPELVRTSPLTQREWQVLGLIYSGFSNEQIAQELDVAGTTIKTHIRNLYQKLNIANRKEAIVTAENLLQLMGY</sequence>
<dbReference type="EMBL" id="BA000032">
    <property type="protein sequence ID" value="BAC62966.1"/>
    <property type="molecule type" value="Genomic_DNA"/>
</dbReference>
<dbReference type="RefSeq" id="NP_801133.1">
    <property type="nucleotide sequence ID" value="NC_004605.1"/>
</dbReference>
<dbReference type="RefSeq" id="WP_005480178.1">
    <property type="nucleotide sequence ID" value="NC_004605.1"/>
</dbReference>
<dbReference type="SMR" id="Q87FQ5"/>
<dbReference type="GeneID" id="1192319"/>
<dbReference type="KEGG" id="vpa:VPA1623"/>
<dbReference type="PATRIC" id="fig|223926.6.peg.4542"/>
<dbReference type="eggNOG" id="COG2909">
    <property type="taxonomic scope" value="Bacteria"/>
</dbReference>
<dbReference type="HOGENOM" id="CLU_006325_3_0_6"/>
<dbReference type="Proteomes" id="UP000002493">
    <property type="component" value="Chromosome 2"/>
</dbReference>
<dbReference type="GO" id="GO:0005524">
    <property type="term" value="F:ATP binding"/>
    <property type="evidence" value="ECO:0007669"/>
    <property type="project" value="UniProtKB-UniRule"/>
</dbReference>
<dbReference type="GO" id="GO:0003677">
    <property type="term" value="F:DNA binding"/>
    <property type="evidence" value="ECO:0007669"/>
    <property type="project" value="UniProtKB-KW"/>
</dbReference>
<dbReference type="GO" id="GO:0003700">
    <property type="term" value="F:DNA-binding transcription factor activity"/>
    <property type="evidence" value="ECO:0007669"/>
    <property type="project" value="UniProtKB-UniRule"/>
</dbReference>
<dbReference type="GO" id="GO:0045913">
    <property type="term" value="P:positive regulation of carbohydrate metabolic process"/>
    <property type="evidence" value="ECO:0007669"/>
    <property type="project" value="UniProtKB-UniRule"/>
</dbReference>
<dbReference type="GO" id="GO:0045893">
    <property type="term" value="P:positive regulation of DNA-templated transcription"/>
    <property type="evidence" value="ECO:0007669"/>
    <property type="project" value="UniProtKB-UniRule"/>
</dbReference>
<dbReference type="CDD" id="cd06170">
    <property type="entry name" value="LuxR_C_like"/>
    <property type="match status" value="1"/>
</dbReference>
<dbReference type="Gene3D" id="3.40.50.300">
    <property type="entry name" value="P-loop containing nucleotide triphosphate hydrolases"/>
    <property type="match status" value="1"/>
</dbReference>
<dbReference type="Gene3D" id="1.25.40.10">
    <property type="entry name" value="Tetratricopeptide repeat domain"/>
    <property type="match status" value="1"/>
</dbReference>
<dbReference type="Gene3D" id="1.10.10.10">
    <property type="entry name" value="Winged helix-like DNA-binding domain superfamily/Winged helix DNA-binding domain"/>
    <property type="match status" value="1"/>
</dbReference>
<dbReference type="HAMAP" id="MF_01247">
    <property type="entry name" value="HTH_type_MalT"/>
    <property type="match status" value="1"/>
</dbReference>
<dbReference type="InterPro" id="IPR027417">
    <property type="entry name" value="P-loop_NTPase"/>
</dbReference>
<dbReference type="InterPro" id="IPR016032">
    <property type="entry name" value="Sig_transdc_resp-reg_C-effctor"/>
</dbReference>
<dbReference type="InterPro" id="IPR011990">
    <property type="entry name" value="TPR-like_helical_dom_sf"/>
</dbReference>
<dbReference type="InterPro" id="IPR041617">
    <property type="entry name" value="TPR_MalT"/>
</dbReference>
<dbReference type="InterPro" id="IPR023768">
    <property type="entry name" value="Tscrpt_reg_HTH_MalT"/>
</dbReference>
<dbReference type="InterPro" id="IPR000792">
    <property type="entry name" value="Tscrpt_reg_LuxR_C"/>
</dbReference>
<dbReference type="InterPro" id="IPR036388">
    <property type="entry name" value="WH-like_DNA-bd_sf"/>
</dbReference>
<dbReference type="NCBIfam" id="NF003420">
    <property type="entry name" value="PRK04841.1"/>
    <property type="match status" value="1"/>
</dbReference>
<dbReference type="PANTHER" id="PTHR44688">
    <property type="entry name" value="DNA-BINDING TRANSCRIPTIONAL ACTIVATOR DEVR_DOSR"/>
    <property type="match status" value="1"/>
</dbReference>
<dbReference type="PANTHER" id="PTHR44688:SF16">
    <property type="entry name" value="DNA-BINDING TRANSCRIPTIONAL ACTIVATOR DEVR_DOSR"/>
    <property type="match status" value="1"/>
</dbReference>
<dbReference type="Pfam" id="PF00196">
    <property type="entry name" value="GerE"/>
    <property type="match status" value="1"/>
</dbReference>
<dbReference type="Pfam" id="PF17874">
    <property type="entry name" value="TPR_MalT"/>
    <property type="match status" value="1"/>
</dbReference>
<dbReference type="PRINTS" id="PR00038">
    <property type="entry name" value="HTHLUXR"/>
</dbReference>
<dbReference type="SMART" id="SM00421">
    <property type="entry name" value="HTH_LUXR"/>
    <property type="match status" value="1"/>
</dbReference>
<dbReference type="SUPFAM" id="SSF46894">
    <property type="entry name" value="C-terminal effector domain of the bipartite response regulators"/>
    <property type="match status" value="1"/>
</dbReference>
<dbReference type="SUPFAM" id="SSF52540">
    <property type="entry name" value="P-loop containing nucleoside triphosphate hydrolases"/>
    <property type="match status" value="1"/>
</dbReference>
<dbReference type="SUPFAM" id="SSF48452">
    <property type="entry name" value="TPR-like"/>
    <property type="match status" value="1"/>
</dbReference>
<dbReference type="PROSITE" id="PS00622">
    <property type="entry name" value="HTH_LUXR_1"/>
    <property type="match status" value="1"/>
</dbReference>
<dbReference type="PROSITE" id="PS50043">
    <property type="entry name" value="HTH_LUXR_2"/>
    <property type="match status" value="1"/>
</dbReference>
<accession>Q87FQ5</accession>
<evidence type="ECO:0000255" key="1">
    <source>
        <dbReference type="HAMAP-Rule" id="MF_01247"/>
    </source>
</evidence>
<organism>
    <name type="scientific">Vibrio parahaemolyticus serotype O3:K6 (strain RIMD 2210633)</name>
    <dbReference type="NCBI Taxonomy" id="223926"/>
    <lineage>
        <taxon>Bacteria</taxon>
        <taxon>Pseudomonadati</taxon>
        <taxon>Pseudomonadota</taxon>
        <taxon>Gammaproteobacteria</taxon>
        <taxon>Vibrionales</taxon>
        <taxon>Vibrionaceae</taxon>
        <taxon>Vibrio</taxon>
    </lineage>
</organism>
<feature type="chain" id="PRO_0000184170" description="HTH-type transcriptional regulator MalT">
    <location>
        <begin position="1"/>
        <end position="902"/>
    </location>
</feature>
<feature type="domain" description="HTH luxR-type" evidence="1">
    <location>
        <begin position="832"/>
        <end position="897"/>
    </location>
</feature>
<feature type="DNA-binding region" description="H-T-H motif" evidence="1">
    <location>
        <begin position="856"/>
        <end position="875"/>
    </location>
</feature>
<feature type="binding site" evidence="1">
    <location>
        <begin position="39"/>
        <end position="46"/>
    </location>
    <ligand>
        <name>ATP</name>
        <dbReference type="ChEBI" id="CHEBI:30616"/>
    </ligand>
</feature>
<protein>
    <recommendedName>
        <fullName evidence="1">HTH-type transcriptional regulator MalT</fullName>
    </recommendedName>
    <alternativeName>
        <fullName evidence="1">ATP-dependent transcriptional activator MalT</fullName>
    </alternativeName>
</protein>
<proteinExistence type="inferred from homology"/>